<evidence type="ECO:0000255" key="1">
    <source>
        <dbReference type="HAMAP-Rule" id="MF_00791"/>
    </source>
</evidence>
<accession>C6DEY7</accession>
<dbReference type="EMBL" id="CP001657">
    <property type="protein sequence ID" value="ACT14651.1"/>
    <property type="molecule type" value="Genomic_DNA"/>
</dbReference>
<dbReference type="RefSeq" id="WP_015841767.1">
    <property type="nucleotide sequence ID" value="NC_012917.1"/>
</dbReference>
<dbReference type="SMR" id="C6DEY7"/>
<dbReference type="STRING" id="561230.PC1_3636"/>
<dbReference type="GeneID" id="67792555"/>
<dbReference type="KEGG" id="pct:PC1_3636"/>
<dbReference type="eggNOG" id="COG2967">
    <property type="taxonomic scope" value="Bacteria"/>
</dbReference>
<dbReference type="HOGENOM" id="CLU_128074_0_0_6"/>
<dbReference type="OrthoDB" id="9795226at2"/>
<dbReference type="Proteomes" id="UP000002736">
    <property type="component" value="Chromosome"/>
</dbReference>
<dbReference type="GO" id="GO:0070987">
    <property type="term" value="P:error-free translesion synthesis"/>
    <property type="evidence" value="ECO:0007669"/>
    <property type="project" value="TreeGrafter"/>
</dbReference>
<dbReference type="Gene3D" id="2.60.40.1470">
    <property type="entry name" value="ApaG domain"/>
    <property type="match status" value="1"/>
</dbReference>
<dbReference type="HAMAP" id="MF_00791">
    <property type="entry name" value="ApaG"/>
    <property type="match status" value="1"/>
</dbReference>
<dbReference type="InterPro" id="IPR007474">
    <property type="entry name" value="ApaG_domain"/>
</dbReference>
<dbReference type="InterPro" id="IPR036767">
    <property type="entry name" value="ApaG_sf"/>
</dbReference>
<dbReference type="InterPro" id="IPR023065">
    <property type="entry name" value="Uncharacterised_ApaG"/>
</dbReference>
<dbReference type="NCBIfam" id="NF003967">
    <property type="entry name" value="PRK05461.1"/>
    <property type="match status" value="1"/>
</dbReference>
<dbReference type="PANTHER" id="PTHR14289">
    <property type="entry name" value="F-BOX ONLY PROTEIN 3"/>
    <property type="match status" value="1"/>
</dbReference>
<dbReference type="PANTHER" id="PTHR14289:SF16">
    <property type="entry name" value="POLYMERASE DELTA-INTERACTING PROTEIN 2"/>
    <property type="match status" value="1"/>
</dbReference>
<dbReference type="Pfam" id="PF04379">
    <property type="entry name" value="DUF525"/>
    <property type="match status" value="1"/>
</dbReference>
<dbReference type="SUPFAM" id="SSF110069">
    <property type="entry name" value="ApaG-like"/>
    <property type="match status" value="1"/>
</dbReference>
<dbReference type="PROSITE" id="PS51087">
    <property type="entry name" value="APAG"/>
    <property type="match status" value="1"/>
</dbReference>
<proteinExistence type="inferred from homology"/>
<name>APAG_PECCP</name>
<sequence length="125" mass="14070">MINAPRVCVQVQSFYVESQSEPDEERFVFAYTITVRNLGRHEVQLLGRYWLITNGNGRQTEVQGEGVVGEQPIIHPGSEFQYTSGAVIETPLGTMEGHYHMTDHQGKAFQVSIPVFRLAIPSLIH</sequence>
<gene>
    <name evidence="1" type="primary">apaG</name>
    <name type="ordered locus">PC1_3636</name>
</gene>
<feature type="chain" id="PRO_1000212960" description="Protein ApaG">
    <location>
        <begin position="1"/>
        <end position="125"/>
    </location>
</feature>
<feature type="domain" description="ApaG" evidence="1">
    <location>
        <begin position="1"/>
        <end position="125"/>
    </location>
</feature>
<reference key="1">
    <citation type="submission" date="2009-07" db="EMBL/GenBank/DDBJ databases">
        <title>Complete sequence of Pectobacterium carotovorum subsp. carotovorum PC1.</title>
        <authorList>
            <consortium name="US DOE Joint Genome Institute"/>
            <person name="Lucas S."/>
            <person name="Copeland A."/>
            <person name="Lapidus A."/>
            <person name="Glavina del Rio T."/>
            <person name="Tice H."/>
            <person name="Bruce D."/>
            <person name="Goodwin L."/>
            <person name="Pitluck S."/>
            <person name="Munk A.C."/>
            <person name="Brettin T."/>
            <person name="Detter J.C."/>
            <person name="Han C."/>
            <person name="Tapia R."/>
            <person name="Larimer F."/>
            <person name="Land M."/>
            <person name="Hauser L."/>
            <person name="Kyrpides N."/>
            <person name="Mikhailova N."/>
            <person name="Balakrishnan V."/>
            <person name="Glasner J."/>
            <person name="Perna N.T."/>
        </authorList>
    </citation>
    <scope>NUCLEOTIDE SEQUENCE [LARGE SCALE GENOMIC DNA]</scope>
    <source>
        <strain>PC1</strain>
    </source>
</reference>
<protein>
    <recommendedName>
        <fullName evidence="1">Protein ApaG</fullName>
    </recommendedName>
</protein>
<organism>
    <name type="scientific">Pectobacterium carotovorum subsp. carotovorum (strain PC1)</name>
    <dbReference type="NCBI Taxonomy" id="561230"/>
    <lineage>
        <taxon>Bacteria</taxon>
        <taxon>Pseudomonadati</taxon>
        <taxon>Pseudomonadota</taxon>
        <taxon>Gammaproteobacteria</taxon>
        <taxon>Enterobacterales</taxon>
        <taxon>Pectobacteriaceae</taxon>
        <taxon>Pectobacterium</taxon>
    </lineage>
</organism>